<organism>
    <name type="scientific">Ruthia magnifica subsp. Calyptogena magnifica</name>
    <dbReference type="NCBI Taxonomy" id="413404"/>
    <lineage>
        <taxon>Bacteria</taxon>
        <taxon>Pseudomonadati</taxon>
        <taxon>Pseudomonadota</taxon>
        <taxon>Gammaproteobacteria</taxon>
        <taxon>Candidatus Pseudothioglobaceae</taxon>
        <taxon>Candidatus Ruthturnera</taxon>
    </lineage>
</organism>
<proteinExistence type="inferred from homology"/>
<reference key="1">
    <citation type="journal article" date="2007" name="Science">
        <title>The Calyptogena magnifica chemoautotrophic symbiont genome.</title>
        <authorList>
            <person name="Newton I.L.G."/>
            <person name="Woyke T."/>
            <person name="Auchtung T.A."/>
            <person name="Dilly G.F."/>
            <person name="Dutton R.J."/>
            <person name="Fisher M.C."/>
            <person name="Fontanez K.M."/>
            <person name="Lau E."/>
            <person name="Stewart F.J."/>
            <person name="Richardson P.M."/>
            <person name="Barry K.W."/>
            <person name="Saunders E."/>
            <person name="Detter J.C."/>
            <person name="Wu D."/>
            <person name="Eisen J.A."/>
            <person name="Cavanaugh C.M."/>
        </authorList>
    </citation>
    <scope>NUCLEOTIDE SEQUENCE [LARGE SCALE GENOMIC DNA]</scope>
</reference>
<accession>A1AVK5</accession>
<dbReference type="EMBL" id="CP000488">
    <property type="protein sequence ID" value="ABL01962.1"/>
    <property type="molecule type" value="Genomic_DNA"/>
</dbReference>
<dbReference type="RefSeq" id="WP_011737588.1">
    <property type="nucleotide sequence ID" value="NC_008610.1"/>
</dbReference>
<dbReference type="SMR" id="A1AVK5"/>
<dbReference type="STRING" id="413404.Rmag_0170"/>
<dbReference type="KEGG" id="rma:Rmag_0170"/>
<dbReference type="eggNOG" id="COG0091">
    <property type="taxonomic scope" value="Bacteria"/>
</dbReference>
<dbReference type="HOGENOM" id="CLU_083987_3_3_6"/>
<dbReference type="OrthoDB" id="9805969at2"/>
<dbReference type="Proteomes" id="UP000002587">
    <property type="component" value="Chromosome"/>
</dbReference>
<dbReference type="GO" id="GO:0022625">
    <property type="term" value="C:cytosolic large ribosomal subunit"/>
    <property type="evidence" value="ECO:0007669"/>
    <property type="project" value="TreeGrafter"/>
</dbReference>
<dbReference type="GO" id="GO:0019843">
    <property type="term" value="F:rRNA binding"/>
    <property type="evidence" value="ECO:0007669"/>
    <property type="project" value="UniProtKB-UniRule"/>
</dbReference>
<dbReference type="GO" id="GO:0003735">
    <property type="term" value="F:structural constituent of ribosome"/>
    <property type="evidence" value="ECO:0007669"/>
    <property type="project" value="InterPro"/>
</dbReference>
<dbReference type="GO" id="GO:0006412">
    <property type="term" value="P:translation"/>
    <property type="evidence" value="ECO:0007669"/>
    <property type="project" value="UniProtKB-UniRule"/>
</dbReference>
<dbReference type="CDD" id="cd00336">
    <property type="entry name" value="Ribosomal_L22"/>
    <property type="match status" value="1"/>
</dbReference>
<dbReference type="FunFam" id="3.90.470.10:FF:000001">
    <property type="entry name" value="50S ribosomal protein L22"/>
    <property type="match status" value="1"/>
</dbReference>
<dbReference type="Gene3D" id="3.90.470.10">
    <property type="entry name" value="Ribosomal protein L22/L17"/>
    <property type="match status" value="1"/>
</dbReference>
<dbReference type="HAMAP" id="MF_01331_B">
    <property type="entry name" value="Ribosomal_uL22_B"/>
    <property type="match status" value="1"/>
</dbReference>
<dbReference type="InterPro" id="IPR001063">
    <property type="entry name" value="Ribosomal_uL22"/>
</dbReference>
<dbReference type="InterPro" id="IPR005727">
    <property type="entry name" value="Ribosomal_uL22_bac/chlpt-type"/>
</dbReference>
<dbReference type="InterPro" id="IPR047867">
    <property type="entry name" value="Ribosomal_uL22_bac/org-type"/>
</dbReference>
<dbReference type="InterPro" id="IPR018260">
    <property type="entry name" value="Ribosomal_uL22_CS"/>
</dbReference>
<dbReference type="InterPro" id="IPR036394">
    <property type="entry name" value="Ribosomal_uL22_sf"/>
</dbReference>
<dbReference type="NCBIfam" id="TIGR01044">
    <property type="entry name" value="rplV_bact"/>
    <property type="match status" value="1"/>
</dbReference>
<dbReference type="PANTHER" id="PTHR13501">
    <property type="entry name" value="CHLOROPLAST 50S RIBOSOMAL PROTEIN L22-RELATED"/>
    <property type="match status" value="1"/>
</dbReference>
<dbReference type="PANTHER" id="PTHR13501:SF8">
    <property type="entry name" value="LARGE RIBOSOMAL SUBUNIT PROTEIN UL22M"/>
    <property type="match status" value="1"/>
</dbReference>
<dbReference type="Pfam" id="PF00237">
    <property type="entry name" value="Ribosomal_L22"/>
    <property type="match status" value="1"/>
</dbReference>
<dbReference type="SUPFAM" id="SSF54843">
    <property type="entry name" value="Ribosomal protein L22"/>
    <property type="match status" value="1"/>
</dbReference>
<dbReference type="PROSITE" id="PS00464">
    <property type="entry name" value="RIBOSOMAL_L22"/>
    <property type="match status" value="1"/>
</dbReference>
<sequence>MKEVKAIHKYAKTSAFKVRLVANQIRLKSVDEALNILSFSNKKAAVLIKKVLNSAISNAEHNDGLDIDELFVASICIDEGSTMKRIRPRAKGKANRILKRTSHITVGVSK</sequence>
<protein>
    <recommendedName>
        <fullName evidence="1">Large ribosomal subunit protein uL22</fullName>
    </recommendedName>
    <alternativeName>
        <fullName evidence="2">50S ribosomal protein L22</fullName>
    </alternativeName>
</protein>
<feature type="chain" id="PRO_1000142300" description="Large ribosomal subunit protein uL22">
    <location>
        <begin position="1"/>
        <end position="110"/>
    </location>
</feature>
<evidence type="ECO:0000255" key="1">
    <source>
        <dbReference type="HAMAP-Rule" id="MF_01331"/>
    </source>
</evidence>
<evidence type="ECO:0000305" key="2"/>
<comment type="function">
    <text evidence="1">This protein binds specifically to 23S rRNA; its binding is stimulated by other ribosomal proteins, e.g. L4, L17, and L20. It is important during the early stages of 50S assembly. It makes multiple contacts with different domains of the 23S rRNA in the assembled 50S subunit and ribosome (By similarity).</text>
</comment>
<comment type="function">
    <text evidence="1">The globular domain of the protein is located near the polypeptide exit tunnel on the outside of the subunit, while an extended beta-hairpin is found that lines the wall of the exit tunnel in the center of the 70S ribosome.</text>
</comment>
<comment type="subunit">
    <text evidence="1">Part of the 50S ribosomal subunit.</text>
</comment>
<comment type="similarity">
    <text evidence="1">Belongs to the universal ribosomal protein uL22 family.</text>
</comment>
<gene>
    <name evidence="1" type="primary">rplV</name>
    <name type="ordered locus">Rmag_0170</name>
</gene>
<keyword id="KW-0687">Ribonucleoprotein</keyword>
<keyword id="KW-0689">Ribosomal protein</keyword>
<keyword id="KW-0694">RNA-binding</keyword>
<keyword id="KW-0699">rRNA-binding</keyword>
<name>RL22_RUTMC</name>